<protein>
    <recommendedName>
        <fullName>NADH-ubiquinone oxidoreductase chain 4L</fullName>
        <ecNumber evidence="4 5">7.1.1.2</ecNumber>
    </recommendedName>
    <alternativeName>
        <fullName evidence="1">NADH dehydrogenase subunit 4L</fullName>
    </alternativeName>
</protein>
<evidence type="ECO:0000250" key="1">
    <source>
        <dbReference type="UniProtKB" id="P03901"/>
    </source>
</evidence>
<evidence type="ECO:0000255" key="2"/>
<evidence type="ECO:0000269" key="3">
    <source>
    </source>
</evidence>
<evidence type="ECO:0000269" key="4">
    <source>
    </source>
</evidence>
<evidence type="ECO:0000269" key="5">
    <source>
    </source>
</evidence>
<evidence type="ECO:0000305" key="6"/>
<evidence type="ECO:0000305" key="7">
    <source>
    </source>
</evidence>
<evidence type="ECO:0000305" key="8">
    <source>
    </source>
</evidence>
<evidence type="ECO:0000312" key="9">
    <source>
        <dbReference type="Proteomes" id="UP000009136"/>
    </source>
</evidence>
<evidence type="ECO:0007829" key="10">
    <source>
        <dbReference type="PDB" id="7QSM"/>
    </source>
</evidence>
<name>NU4LM_BOVIN</name>
<feature type="chain" id="PRO_0000118396" description="NADH-ubiquinone oxidoreductase chain 4L">
    <location>
        <begin position="1"/>
        <end position="98"/>
    </location>
</feature>
<feature type="transmembrane region" description="Helical" evidence="2">
    <location>
        <begin position="1"/>
        <end position="21"/>
    </location>
</feature>
<feature type="transmembrane region" description="Helical" evidence="2">
    <location>
        <begin position="29"/>
        <end position="49"/>
    </location>
</feature>
<feature type="transmembrane region" description="Helical" evidence="2">
    <location>
        <begin position="61"/>
        <end position="81"/>
    </location>
</feature>
<feature type="modified residue" description="N-formylmethionine" evidence="3">
    <location>
        <position position="1"/>
    </location>
</feature>
<feature type="sequence variant" description="In strain: 66.">
    <original>V</original>
    <variation>A</variation>
    <location>
        <position position="65"/>
    </location>
</feature>
<feature type="helix" evidence="10">
    <location>
        <begin position="3"/>
        <end position="20"/>
    </location>
</feature>
<feature type="helix" evidence="10">
    <location>
        <begin position="26"/>
        <end position="51"/>
    </location>
</feature>
<feature type="helix" evidence="10">
    <location>
        <begin position="55"/>
        <end position="58"/>
    </location>
</feature>
<feature type="helix" evidence="10">
    <location>
        <begin position="59"/>
        <end position="85"/>
    </location>
</feature>
<feature type="helix" evidence="10">
    <location>
        <begin position="90"/>
        <end position="92"/>
    </location>
</feature>
<feature type="helix" evidence="10">
    <location>
        <begin position="95"/>
        <end position="97"/>
    </location>
</feature>
<proteinExistence type="evidence at protein level"/>
<geneLocation type="mitochondrion"/>
<keyword id="KW-0002">3D-structure</keyword>
<keyword id="KW-0249">Electron transport</keyword>
<keyword id="KW-0291">Formylation</keyword>
<keyword id="KW-0472">Membrane</keyword>
<keyword id="KW-0496">Mitochondrion</keyword>
<keyword id="KW-0999">Mitochondrion inner membrane</keyword>
<keyword id="KW-0520">NAD</keyword>
<keyword id="KW-1185">Reference proteome</keyword>
<keyword id="KW-0679">Respiratory chain</keyword>
<keyword id="KW-1278">Translocase</keyword>
<keyword id="KW-0812">Transmembrane</keyword>
<keyword id="KW-1133">Transmembrane helix</keyword>
<keyword id="KW-0813">Transport</keyword>
<keyword id="KW-0830">Ubiquinone</keyword>
<sequence length="98" mass="10797">MSMVYMNIMMAFTVSLVGLLMYRSHLMSSLLCLEGMMLSLFVMAALTILNSHFTLASMMPIILLVFAACEAALGLSLLVMVSNTYGTDYVQNLNLLQC</sequence>
<organism>
    <name type="scientific">Bos taurus</name>
    <name type="common">Bovine</name>
    <dbReference type="NCBI Taxonomy" id="9913"/>
    <lineage>
        <taxon>Eukaryota</taxon>
        <taxon>Metazoa</taxon>
        <taxon>Chordata</taxon>
        <taxon>Craniata</taxon>
        <taxon>Vertebrata</taxon>
        <taxon>Euteleostomi</taxon>
        <taxon>Mammalia</taxon>
        <taxon>Eutheria</taxon>
        <taxon>Laurasiatheria</taxon>
        <taxon>Artiodactyla</taxon>
        <taxon>Ruminantia</taxon>
        <taxon>Pecora</taxon>
        <taxon>Bovidae</taxon>
        <taxon>Bovinae</taxon>
        <taxon>Bos</taxon>
    </lineage>
</organism>
<gene>
    <name evidence="1" type="primary">MT-ND4L</name>
    <name type="synonym">MTND4L</name>
    <name type="synonym">NADH4L</name>
    <name type="synonym">ND4L</name>
</gene>
<accession>P03902</accession>
<accession>Q8SFX7</accession>
<reference key="1">
    <citation type="journal article" date="1982" name="J. Mol. Biol.">
        <title>Complete sequence of bovine mitochondrial DNA. Conserved features of the mammalian mitochondrial genome.</title>
        <authorList>
            <person name="Anderson S."/>
            <person name="de Bruijn M.H.L."/>
            <person name="Coulson A.R."/>
            <person name="Eperon I.C."/>
            <person name="Sanger F."/>
            <person name="Young I.G."/>
        </authorList>
    </citation>
    <scope>NUCLEOTIDE SEQUENCE [GENOMIC DNA]</scope>
    <source>
        <strain evidence="9">Hereford</strain>
        <tissue>Heart</tissue>
    </source>
</reference>
<reference key="2">
    <citation type="submission" date="2002-03" db="EMBL/GenBank/DDBJ databases">
        <title>Bos taurus mitochondrial protein coding regions.</title>
        <authorList>
            <person name="Wettstein P.J."/>
        </authorList>
    </citation>
    <scope>NUCLEOTIDE SEQUENCE [GENOMIC DNA]</scope>
    <source>
        <strain>65</strain>
        <strain>66</strain>
        <strain>D</strain>
        <strain>F</strain>
    </source>
</reference>
<reference key="3">
    <citation type="journal article" date="2008" name="Anal. Biochem.">
        <title>Subunit analysis of bovine heart complex I by reversed-phase high-performance liquid chromatography, electrospray ionization-tandem mass spectrometry, and matrix-assisted laser desorption/ionization-time-of-flight mass spectrometry.</title>
        <authorList>
            <person name="Lemma-Gray P."/>
            <person name="Valusova E."/>
            <person name="Carroll C.A."/>
            <person name="Weintraub S.T."/>
            <person name="Musatov A."/>
            <person name="Robinson N.C."/>
        </authorList>
    </citation>
    <scope>SUBUNIT</scope>
    <scope>IDENTIFICATION IN COMPLEX I</scope>
    <scope>SUBCELLULAR LOCATION</scope>
    <scope>FUNCTION</scope>
    <scope>CATALYTIC ACTIVITY</scope>
</reference>
<reference key="4">
    <citation type="journal article" date="2006" name="Proc. Natl. Acad. Sci. U.S.A.">
        <title>Definition of the mitochondrial proteome by measurement of molecular masses of membrane proteins.</title>
        <authorList>
            <person name="Carroll J."/>
            <person name="Fearnley I.M."/>
            <person name="Walker J.E."/>
        </authorList>
    </citation>
    <scope>SUBCELLULAR LOCATION</scope>
    <scope>FORMYLATION AT MET-1</scope>
    <scope>MASS SPECTROMETRY</scope>
</reference>
<reference key="5">
    <citation type="journal article" date="2014" name="Nature">
        <title>Architecture of mammalian respiratory complex I.</title>
        <authorList>
            <person name="Vinothkumar K.R."/>
            <person name="Zhu J."/>
            <person name="Hirst J."/>
        </authorList>
    </citation>
    <scope>FUNCTION</scope>
    <scope>CATALYTIC ACTIVITY</scope>
    <scope>SUBUNIT</scope>
    <scope>SUBCELLULAR LOCATION</scope>
</reference>
<comment type="function">
    <text evidence="4 5">Core subunit of the mitochondrial membrane respiratory chain NADH dehydrogenase (Complex I) which catalyzes electron transfer from NADH through the respiratory chain, using ubiquinone as an electron acceptor (PubMed:18721790, PubMed:25209663). Part of the enzyme membrane arm which is embedded in the lipid bilayer and involved in proton translocation (PubMed:18721790, PubMed:25209663).</text>
</comment>
<comment type="catalytic activity">
    <reaction evidence="7 8">
        <text>a ubiquinone + NADH + 5 H(+)(in) = a ubiquinol + NAD(+) + 4 H(+)(out)</text>
        <dbReference type="Rhea" id="RHEA:29091"/>
        <dbReference type="Rhea" id="RHEA-COMP:9565"/>
        <dbReference type="Rhea" id="RHEA-COMP:9566"/>
        <dbReference type="ChEBI" id="CHEBI:15378"/>
        <dbReference type="ChEBI" id="CHEBI:16389"/>
        <dbReference type="ChEBI" id="CHEBI:17976"/>
        <dbReference type="ChEBI" id="CHEBI:57540"/>
        <dbReference type="ChEBI" id="CHEBI:57945"/>
        <dbReference type="EC" id="7.1.1.2"/>
    </reaction>
    <physiologicalReaction direction="left-to-right" evidence="7 8">
        <dbReference type="Rhea" id="RHEA:29092"/>
    </physiologicalReaction>
</comment>
<comment type="subunit">
    <text evidence="5">Core subunit of respiratory chain NADH dehydrogenase (Complex I) which is composed of 45 different subunits.</text>
</comment>
<comment type="subcellular location">
    <subcellularLocation>
        <location evidence="3 4 5">Mitochondrion inner membrane</location>
        <topology evidence="2">Multi-pass membrane protein</topology>
    </subcellularLocation>
</comment>
<comment type="mass spectrometry" mass="10825.4" method="Electrospray" evidence="3"/>
<comment type="similarity">
    <text evidence="6">Belongs to the complex I subunit 4L family.</text>
</comment>
<dbReference type="EC" id="7.1.1.2" evidence="4 5"/>
<dbReference type="EMBL" id="V00654">
    <property type="protein sequence ID" value="CAA24004.1"/>
    <property type="molecule type" value="Genomic_DNA"/>
</dbReference>
<dbReference type="EMBL" id="AF490528">
    <property type="protein sequence ID" value="AAM08325.1"/>
    <property type="molecule type" value="Genomic_DNA"/>
</dbReference>
<dbReference type="EMBL" id="AF490529">
    <property type="protein sequence ID" value="AAM08338.1"/>
    <property type="molecule type" value="Genomic_DNA"/>
</dbReference>
<dbReference type="EMBL" id="AF493541">
    <property type="protein sequence ID" value="AAM12797.1"/>
    <property type="molecule type" value="Genomic_DNA"/>
</dbReference>
<dbReference type="EMBL" id="AF493542">
    <property type="protein sequence ID" value="AAM12810.1"/>
    <property type="molecule type" value="Genomic_DNA"/>
</dbReference>
<dbReference type="PIR" id="A00429">
    <property type="entry name" value="QXBO4L"/>
</dbReference>
<dbReference type="RefSeq" id="YP_209213.1">
    <property type="nucleotide sequence ID" value="NC_006853.1"/>
</dbReference>
<dbReference type="PDB" id="5LC5">
    <property type="method" value="EM"/>
    <property type="resolution" value="4.35 A"/>
    <property type="chains" value="K=2-96"/>
</dbReference>
<dbReference type="PDB" id="5LDW">
    <property type="method" value="EM"/>
    <property type="resolution" value="4.27 A"/>
    <property type="chains" value="K=1-98"/>
</dbReference>
<dbReference type="PDB" id="5LDX">
    <property type="method" value="EM"/>
    <property type="resolution" value="5.60 A"/>
    <property type="chains" value="K=1-98"/>
</dbReference>
<dbReference type="PDB" id="5O31">
    <property type="method" value="EM"/>
    <property type="resolution" value="4.13 A"/>
    <property type="chains" value="K=1-98"/>
</dbReference>
<dbReference type="PDB" id="7DGQ">
    <property type="method" value="EM"/>
    <property type="resolution" value="5.00 A"/>
    <property type="chains" value="5=1-98"/>
</dbReference>
<dbReference type="PDB" id="7DGR">
    <property type="method" value="EM"/>
    <property type="resolution" value="4.60 A"/>
    <property type="chains" value="5=1-98"/>
</dbReference>
<dbReference type="PDB" id="7DGS">
    <property type="method" value="EM"/>
    <property type="resolution" value="7.80 A"/>
    <property type="chains" value="5=1-98"/>
</dbReference>
<dbReference type="PDB" id="7DGZ">
    <property type="method" value="EM"/>
    <property type="resolution" value="3.80 A"/>
    <property type="chains" value="5=1-98"/>
</dbReference>
<dbReference type="PDB" id="7DH0">
    <property type="method" value="EM"/>
    <property type="resolution" value="4.20 A"/>
    <property type="chains" value="5=1-98"/>
</dbReference>
<dbReference type="PDB" id="7DKF">
    <property type="method" value="EM"/>
    <property type="resolution" value="8.30 A"/>
    <property type="chains" value="52=1-98"/>
</dbReference>
<dbReference type="PDB" id="7QSD">
    <property type="method" value="EM"/>
    <property type="resolution" value="3.10 A"/>
    <property type="chains" value="K=1-98"/>
</dbReference>
<dbReference type="PDB" id="7QSK">
    <property type="method" value="EM"/>
    <property type="resolution" value="2.84 A"/>
    <property type="chains" value="K=1-98"/>
</dbReference>
<dbReference type="PDB" id="7QSL">
    <property type="method" value="EM"/>
    <property type="resolution" value="2.76 A"/>
    <property type="chains" value="K=1-98"/>
</dbReference>
<dbReference type="PDB" id="7QSM">
    <property type="method" value="EM"/>
    <property type="resolution" value="2.30 A"/>
    <property type="chains" value="K=1-98"/>
</dbReference>
<dbReference type="PDB" id="7QSN">
    <property type="method" value="EM"/>
    <property type="resolution" value="2.81 A"/>
    <property type="chains" value="K=1-98"/>
</dbReference>
<dbReference type="PDB" id="7QSO">
    <property type="method" value="EM"/>
    <property type="resolution" value="3.02 A"/>
    <property type="chains" value="K=1-98"/>
</dbReference>
<dbReference type="PDB" id="7R41">
    <property type="method" value="EM"/>
    <property type="resolution" value="2.30 A"/>
    <property type="chains" value="K=1-98"/>
</dbReference>
<dbReference type="PDB" id="7R42">
    <property type="method" value="EM"/>
    <property type="resolution" value="2.30 A"/>
    <property type="chains" value="K=1-98"/>
</dbReference>
<dbReference type="PDB" id="7R43">
    <property type="method" value="EM"/>
    <property type="resolution" value="2.40 A"/>
    <property type="chains" value="K=1-98"/>
</dbReference>
<dbReference type="PDB" id="7R44">
    <property type="method" value="EM"/>
    <property type="resolution" value="2.40 A"/>
    <property type="chains" value="K=1-98"/>
</dbReference>
<dbReference type="PDB" id="7R45">
    <property type="method" value="EM"/>
    <property type="resolution" value="2.40 A"/>
    <property type="chains" value="K=1-98"/>
</dbReference>
<dbReference type="PDB" id="7R46">
    <property type="method" value="EM"/>
    <property type="resolution" value="2.40 A"/>
    <property type="chains" value="K=1-98"/>
</dbReference>
<dbReference type="PDB" id="7R47">
    <property type="method" value="EM"/>
    <property type="resolution" value="2.30 A"/>
    <property type="chains" value="K=1-98"/>
</dbReference>
<dbReference type="PDB" id="7R48">
    <property type="method" value="EM"/>
    <property type="resolution" value="2.30 A"/>
    <property type="chains" value="K=1-98"/>
</dbReference>
<dbReference type="PDB" id="7R4C">
    <property type="method" value="EM"/>
    <property type="resolution" value="2.30 A"/>
    <property type="chains" value="K=1-98"/>
</dbReference>
<dbReference type="PDB" id="7R4D">
    <property type="method" value="EM"/>
    <property type="resolution" value="2.30 A"/>
    <property type="chains" value="K=1-98"/>
</dbReference>
<dbReference type="PDB" id="7R4F">
    <property type="method" value="EM"/>
    <property type="resolution" value="2.40 A"/>
    <property type="chains" value="K=1-98"/>
</dbReference>
<dbReference type="PDB" id="7R4G">
    <property type="method" value="EM"/>
    <property type="resolution" value="2.50 A"/>
    <property type="chains" value="K=1-98"/>
</dbReference>
<dbReference type="PDB" id="8Q0A">
    <property type="method" value="EM"/>
    <property type="resolution" value="3.10 A"/>
    <property type="chains" value="K=1-98"/>
</dbReference>
<dbReference type="PDB" id="8Q0F">
    <property type="method" value="EM"/>
    <property type="resolution" value="3.10 A"/>
    <property type="chains" value="K=1-98"/>
</dbReference>
<dbReference type="PDB" id="8Q0J">
    <property type="method" value="EM"/>
    <property type="resolution" value="3.80 A"/>
    <property type="chains" value="K=1-98"/>
</dbReference>
<dbReference type="PDB" id="8Q0M">
    <property type="method" value="EM"/>
    <property type="resolution" value="3.10 A"/>
    <property type="chains" value="K=1-98"/>
</dbReference>
<dbReference type="PDB" id="8Q0O">
    <property type="method" value="EM"/>
    <property type="resolution" value="3.10 A"/>
    <property type="chains" value="K=1-98"/>
</dbReference>
<dbReference type="PDB" id="8Q0Q">
    <property type="method" value="EM"/>
    <property type="resolution" value="3.60 A"/>
    <property type="chains" value="K=1-98"/>
</dbReference>
<dbReference type="PDB" id="8Q1P">
    <property type="method" value="EM"/>
    <property type="resolution" value="2.90 A"/>
    <property type="chains" value="K=1-98"/>
</dbReference>
<dbReference type="PDB" id="8Q1U">
    <property type="method" value="EM"/>
    <property type="resolution" value="3.30 A"/>
    <property type="chains" value="K=1-98"/>
</dbReference>
<dbReference type="PDB" id="8Q1Y">
    <property type="method" value="EM"/>
    <property type="resolution" value="2.60 A"/>
    <property type="chains" value="K=1-98"/>
</dbReference>
<dbReference type="PDB" id="8Q25">
    <property type="method" value="EM"/>
    <property type="resolution" value="2.80 A"/>
    <property type="chains" value="K=1-98"/>
</dbReference>
<dbReference type="PDB" id="8Q45">
    <property type="method" value="EM"/>
    <property type="resolution" value="2.70 A"/>
    <property type="chains" value="K=1-98"/>
</dbReference>
<dbReference type="PDB" id="8Q46">
    <property type="method" value="EM"/>
    <property type="resolution" value="2.60 A"/>
    <property type="chains" value="K=1-98"/>
</dbReference>
<dbReference type="PDB" id="8Q47">
    <property type="method" value="EM"/>
    <property type="resolution" value="2.90 A"/>
    <property type="chains" value="K=1-98"/>
</dbReference>
<dbReference type="PDB" id="8Q48">
    <property type="method" value="EM"/>
    <property type="resolution" value="2.50 A"/>
    <property type="chains" value="K=1-98"/>
</dbReference>
<dbReference type="PDB" id="8Q49">
    <property type="method" value="EM"/>
    <property type="resolution" value="2.60 A"/>
    <property type="chains" value="K=1-98"/>
</dbReference>
<dbReference type="PDB" id="8Q4A">
    <property type="method" value="EM"/>
    <property type="resolution" value="2.60 A"/>
    <property type="chains" value="K=1-98"/>
</dbReference>
<dbReference type="PDBsum" id="5LC5"/>
<dbReference type="PDBsum" id="5LDW"/>
<dbReference type="PDBsum" id="5LDX"/>
<dbReference type="PDBsum" id="5O31"/>
<dbReference type="PDBsum" id="7DGQ"/>
<dbReference type="PDBsum" id="7DGR"/>
<dbReference type="PDBsum" id="7DGS"/>
<dbReference type="PDBsum" id="7DGZ"/>
<dbReference type="PDBsum" id="7DH0"/>
<dbReference type="PDBsum" id="7DKF"/>
<dbReference type="PDBsum" id="7QSD"/>
<dbReference type="PDBsum" id="7QSK"/>
<dbReference type="PDBsum" id="7QSL"/>
<dbReference type="PDBsum" id="7QSM"/>
<dbReference type="PDBsum" id="7QSN"/>
<dbReference type="PDBsum" id="7QSO"/>
<dbReference type="PDBsum" id="7R41"/>
<dbReference type="PDBsum" id="7R42"/>
<dbReference type="PDBsum" id="7R43"/>
<dbReference type="PDBsum" id="7R44"/>
<dbReference type="PDBsum" id="7R45"/>
<dbReference type="PDBsum" id="7R46"/>
<dbReference type="PDBsum" id="7R47"/>
<dbReference type="PDBsum" id="7R48"/>
<dbReference type="PDBsum" id="7R4C"/>
<dbReference type="PDBsum" id="7R4D"/>
<dbReference type="PDBsum" id="7R4F"/>
<dbReference type="PDBsum" id="7R4G"/>
<dbReference type="PDBsum" id="8Q0A"/>
<dbReference type="PDBsum" id="8Q0F"/>
<dbReference type="PDBsum" id="8Q0J"/>
<dbReference type="PDBsum" id="8Q0M"/>
<dbReference type="PDBsum" id="8Q0O"/>
<dbReference type="PDBsum" id="8Q0Q"/>
<dbReference type="PDBsum" id="8Q1P"/>
<dbReference type="PDBsum" id="8Q1U"/>
<dbReference type="PDBsum" id="8Q1Y"/>
<dbReference type="PDBsum" id="8Q25"/>
<dbReference type="PDBsum" id="8Q45"/>
<dbReference type="PDBsum" id="8Q46"/>
<dbReference type="PDBsum" id="8Q47"/>
<dbReference type="PDBsum" id="8Q48"/>
<dbReference type="PDBsum" id="8Q49"/>
<dbReference type="PDBsum" id="8Q4A"/>
<dbReference type="EMDB" id="EMD-14127"/>
<dbReference type="EMDB" id="EMD-14132"/>
<dbReference type="EMDB" id="EMD-14133"/>
<dbReference type="EMDB" id="EMD-14134"/>
<dbReference type="EMDB" id="EMD-14139"/>
<dbReference type="EMDB" id="EMD-14140"/>
<dbReference type="EMDB" id="EMD-14251"/>
<dbReference type="EMDB" id="EMD-14256"/>
<dbReference type="EMDB" id="EMD-14261"/>
<dbReference type="EMDB" id="EMD-14266"/>
<dbReference type="EMDB" id="EMD-14272"/>
<dbReference type="EMDB" id="EMD-14277"/>
<dbReference type="EMDB" id="EMD-14282"/>
<dbReference type="EMDB" id="EMD-14287"/>
<dbReference type="EMDB" id="EMD-14292"/>
<dbReference type="EMDB" id="EMD-14297"/>
<dbReference type="EMDB" id="EMD-14302"/>
<dbReference type="EMDB" id="EMD-14307"/>
<dbReference type="EMDB" id="EMD-18051"/>
<dbReference type="EMDB" id="EMD-18052"/>
<dbReference type="EMDB" id="EMD-18054"/>
<dbReference type="EMDB" id="EMD-18055"/>
<dbReference type="EMDB" id="EMD-18057"/>
<dbReference type="EMDB" id="EMD-18059"/>
<dbReference type="EMDB" id="EMD-18066"/>
<dbReference type="EMDB" id="EMD-18067"/>
<dbReference type="EMDB" id="EMD-18068"/>
<dbReference type="EMDB" id="EMD-18069"/>
<dbReference type="EMDB" id="EMD-18138"/>
<dbReference type="EMDB" id="EMD-18139"/>
<dbReference type="EMDB" id="EMD-18140"/>
<dbReference type="EMDB" id="EMD-18141"/>
<dbReference type="EMDB" id="EMD-18142"/>
<dbReference type="EMDB" id="EMD-18143"/>
<dbReference type="EMDB" id="EMD-30673"/>
<dbReference type="EMDB" id="EMD-30674"/>
<dbReference type="EMDB" id="EMD-30675"/>
<dbReference type="EMDB" id="EMD-30676"/>
<dbReference type="EMDB" id="EMD-30677"/>
<dbReference type="EMDB" id="EMD-30706"/>
<dbReference type="EMDB" id="EMD-3731"/>
<dbReference type="EMDB" id="EMD-4032"/>
<dbReference type="EMDB" id="EMD-4040"/>
<dbReference type="EMDB" id="EMD-4041"/>
<dbReference type="SMR" id="P03902"/>
<dbReference type="CORUM" id="P03902"/>
<dbReference type="DIP" id="DIP-62099N"/>
<dbReference type="FunCoup" id="P03902">
    <property type="interactions" value="172"/>
</dbReference>
<dbReference type="STRING" id="9913.ENSBTAP00000053153"/>
<dbReference type="TCDB" id="3.D.1.6.1">
    <property type="family name" value="the h+ or na+-translocating nadh dehydrogenase (ndh) family"/>
</dbReference>
<dbReference type="PaxDb" id="9913-ENSBTAP00000053153"/>
<dbReference type="Ensembl" id="ENSBTAT00000060543.1">
    <property type="protein sequence ID" value="ENSBTAP00000053153.1"/>
    <property type="gene ID" value="ENSBTAG00000043559.1"/>
</dbReference>
<dbReference type="GeneID" id="3283885"/>
<dbReference type="KEGG" id="bta:3283885"/>
<dbReference type="CTD" id="4539"/>
<dbReference type="VEuPathDB" id="HostDB:ENSBTAG00000043559"/>
<dbReference type="VGNC" id="VGNC:55744">
    <property type="gene designation" value="MT-ND4L"/>
</dbReference>
<dbReference type="eggNOG" id="KOG4669">
    <property type="taxonomic scope" value="Eukaryota"/>
</dbReference>
<dbReference type="GeneTree" id="ENSGT00390000004755"/>
<dbReference type="HOGENOM" id="CLU_182394_0_0_1"/>
<dbReference type="InParanoid" id="P03902"/>
<dbReference type="OMA" id="MYRSHLM"/>
<dbReference type="OrthoDB" id="6146597at2759"/>
<dbReference type="TreeFam" id="TF338190"/>
<dbReference type="Proteomes" id="UP000009136">
    <property type="component" value="Mitochondrion MT"/>
</dbReference>
<dbReference type="Bgee" id="ENSBTAG00000043559">
    <property type="expression patterns" value="Expressed in spermatocyte and 104 other cell types or tissues"/>
</dbReference>
<dbReference type="GO" id="GO:0005743">
    <property type="term" value="C:mitochondrial inner membrane"/>
    <property type="evidence" value="ECO:0000314"/>
    <property type="project" value="UniProtKB"/>
</dbReference>
<dbReference type="GO" id="GO:0045271">
    <property type="term" value="C:respiratory chain complex I"/>
    <property type="evidence" value="ECO:0000314"/>
    <property type="project" value="UniProtKB"/>
</dbReference>
<dbReference type="GO" id="GO:0008137">
    <property type="term" value="F:NADH dehydrogenase (ubiquinone) activity"/>
    <property type="evidence" value="ECO:0000250"/>
    <property type="project" value="UniProtKB"/>
</dbReference>
<dbReference type="GO" id="GO:0042773">
    <property type="term" value="P:ATP synthesis coupled electron transport"/>
    <property type="evidence" value="ECO:0007669"/>
    <property type="project" value="InterPro"/>
</dbReference>
<dbReference type="FunFam" id="1.10.287.3510:FF:000002">
    <property type="entry name" value="NADH-ubiquinone oxidoreductase chain 4L"/>
    <property type="match status" value="1"/>
</dbReference>
<dbReference type="Gene3D" id="1.10.287.3510">
    <property type="match status" value="1"/>
</dbReference>
<dbReference type="InterPro" id="IPR001133">
    <property type="entry name" value="NADH_UbQ_OxRdtase_chain4L/K"/>
</dbReference>
<dbReference type="InterPro" id="IPR039428">
    <property type="entry name" value="NUOK/Mnh_C1-like"/>
</dbReference>
<dbReference type="PANTHER" id="PTHR11434:SF0">
    <property type="entry name" value="NADH-UBIQUINONE OXIDOREDUCTASE CHAIN 4L"/>
    <property type="match status" value="1"/>
</dbReference>
<dbReference type="PANTHER" id="PTHR11434">
    <property type="entry name" value="NADH-UBIQUINONE OXIDOREDUCTASE SUBUNIT ND4L"/>
    <property type="match status" value="1"/>
</dbReference>
<dbReference type="Pfam" id="PF00420">
    <property type="entry name" value="Oxidored_q2"/>
    <property type="match status" value="1"/>
</dbReference>